<protein>
    <recommendedName>
        <fullName>Uncharacterized protein C5orf34 homolog</fullName>
    </recommendedName>
</protein>
<reference key="1">
    <citation type="journal article" date="2004" name="Genome Res.">
        <title>The status, quality, and expansion of the NIH full-length cDNA project: the Mammalian Gene Collection (MGC).</title>
        <authorList>
            <consortium name="The MGC Project Team"/>
        </authorList>
    </citation>
    <scope>NUCLEOTIDE SEQUENCE [LARGE SCALE MRNA]</scope>
    <source>
        <tissue>Testis</tissue>
    </source>
</reference>
<keyword id="KW-1185">Reference proteome</keyword>
<dbReference type="EMBL" id="BC078991">
    <property type="protein sequence ID" value="AAH78991.1"/>
    <property type="molecule type" value="mRNA"/>
</dbReference>
<dbReference type="RefSeq" id="NP_001014059.1">
    <property type="nucleotide sequence ID" value="NM_001014037.1"/>
</dbReference>
<dbReference type="FunCoup" id="Q6AYM1">
    <property type="interactions" value="1918"/>
</dbReference>
<dbReference type="STRING" id="10116.ENSRNOP00000050757"/>
<dbReference type="PhosphoSitePlus" id="Q6AYM1"/>
<dbReference type="PaxDb" id="10116-ENSRNOP00000050757"/>
<dbReference type="Ensembl" id="ENSRNOT00000046174.3">
    <property type="protein sequence ID" value="ENSRNOP00000050757.2"/>
    <property type="gene ID" value="ENSRNOG00000017581.6"/>
</dbReference>
<dbReference type="GeneID" id="310377"/>
<dbReference type="KEGG" id="rno:310377"/>
<dbReference type="AGR" id="RGD:1306227"/>
<dbReference type="CTD" id="310377"/>
<dbReference type="RGD" id="1306227">
    <property type="gene designation" value="C2h5orf34"/>
</dbReference>
<dbReference type="eggNOG" id="ENOG502QSYT">
    <property type="taxonomic scope" value="Eukaryota"/>
</dbReference>
<dbReference type="GeneTree" id="ENSGT00500000044987"/>
<dbReference type="HOGENOM" id="CLU_029198_0_0_1"/>
<dbReference type="InParanoid" id="Q6AYM1"/>
<dbReference type="OMA" id="TAVISWC"/>
<dbReference type="OrthoDB" id="75908at2759"/>
<dbReference type="PhylomeDB" id="Q6AYM1"/>
<dbReference type="TreeFam" id="TF328443"/>
<dbReference type="PRO" id="PR:Q6AYM1"/>
<dbReference type="Proteomes" id="UP000002494">
    <property type="component" value="Chromosome 2"/>
</dbReference>
<dbReference type="Bgee" id="ENSRNOG00000017581">
    <property type="expression patterns" value="Expressed in thymus and 19 other cell types or tissues"/>
</dbReference>
<dbReference type="InterPro" id="IPR053901">
    <property type="entry name" value="C5orf34-like"/>
</dbReference>
<dbReference type="InterPro" id="IPR053899">
    <property type="entry name" value="C5orf34-like_2nd"/>
</dbReference>
<dbReference type="InterPro" id="IPR027865">
    <property type="entry name" value="C5orf34-like_C"/>
</dbReference>
<dbReference type="InterPro" id="IPR053900">
    <property type="entry name" value="C5orf34-like_dom"/>
</dbReference>
<dbReference type="InterPro" id="IPR027830">
    <property type="entry name" value="C5orf34-like_N"/>
</dbReference>
<dbReference type="PANTHER" id="PTHR34531:SF1">
    <property type="entry name" value="CHROMOSOME 5 OPEN READING FRAME 34"/>
    <property type="match status" value="1"/>
</dbReference>
<dbReference type="PANTHER" id="PTHR34531">
    <property type="entry name" value="ZGC:153352"/>
    <property type="match status" value="1"/>
</dbReference>
<dbReference type="Pfam" id="PF15025">
    <property type="entry name" value="C5orf34-like_N"/>
    <property type="match status" value="1"/>
</dbReference>
<dbReference type="Pfam" id="PF22833">
    <property type="entry name" value="C5orf34_2nd"/>
    <property type="match status" value="1"/>
</dbReference>
<dbReference type="Pfam" id="PF15016">
    <property type="entry name" value="C5orf34_C"/>
    <property type="match status" value="1"/>
</dbReference>
<dbReference type="Pfam" id="PF22834">
    <property type="entry name" value="Polo_box_4"/>
    <property type="match status" value="1"/>
</dbReference>
<proteinExistence type="evidence at transcript level"/>
<sequence>MGTAAEVRMVLYEDDSVQVNYADGSTLQLSPCGSEFLFEKAPPPSTHPLEQPERIRQRTHFVISNYREQLQRALDFRNSSATCPFLSESIIPSERKKRVFIDFSEVEWPSPDRDDCITYSESGIVKITSLDGHAYLCLPRSQHEFTVHFLCKVSQKPDSSVMPPETKNRVPKEELVGKTRNVCRSGRLSGQRLRNKENEPPRQLLTSKNASANIHCVSETEGREELPSPGTKRRYVHVWVKQSWSAASCPEEWKYPLSLGLRFYNKVPAASAADAEVPVSGIVTSDNPEERGTGVSVLPRALLLSCSAPHMHRWNFCDSLLQRQSDAEEYSYPELIKVVWYKGVTYRLTHKNVNSIEIFPGDGSVFKSEGTHFGNYFTYSSQDNSGKREEKTYSVNNLPPDRPGNLYSVRSLIKQATRILQHCAKIRLSLSHNYRVCCWRMAPGVNVSSILPVLLKESLIPGVGRFLAYSDDKVHAVFLDGVTLTLNWDLSSSAEKTQVDQGLRLRWCRLTFPDGQDQLIQTEHPGVYERYVTSVVTWCRRLTQTSSRHVSPRLSPVPEENWSVASELEKIQKFNWLLENSGVLNLTSGKKNEQCSSDHCKPGSSETLPEATNEESVSVALKRTSEVLQDIDYLLSLTRK</sequence>
<organism>
    <name type="scientific">Rattus norvegicus</name>
    <name type="common">Rat</name>
    <dbReference type="NCBI Taxonomy" id="10116"/>
    <lineage>
        <taxon>Eukaryota</taxon>
        <taxon>Metazoa</taxon>
        <taxon>Chordata</taxon>
        <taxon>Craniata</taxon>
        <taxon>Vertebrata</taxon>
        <taxon>Euteleostomi</taxon>
        <taxon>Mammalia</taxon>
        <taxon>Eutheria</taxon>
        <taxon>Euarchontoglires</taxon>
        <taxon>Glires</taxon>
        <taxon>Rodentia</taxon>
        <taxon>Myomorpha</taxon>
        <taxon>Muroidea</taxon>
        <taxon>Muridae</taxon>
        <taxon>Murinae</taxon>
        <taxon>Rattus</taxon>
    </lineage>
</organism>
<feature type="chain" id="PRO_0000295899" description="Uncharacterized protein C5orf34 homolog">
    <location>
        <begin position="1"/>
        <end position="640"/>
    </location>
</feature>
<feature type="region of interest" description="Disordered" evidence="1">
    <location>
        <begin position="594"/>
        <end position="614"/>
    </location>
</feature>
<accession>Q6AYM1</accession>
<name>CE034_RAT</name>
<evidence type="ECO:0000256" key="1">
    <source>
        <dbReference type="SAM" id="MobiDB-lite"/>
    </source>
</evidence>